<comment type="function">
    <text evidence="1">Necessary for protein translocation in the endoplasmic reticulum.</text>
</comment>
<comment type="subunit">
    <text evidence="1">Heterotrimeric complex composed of SEC61-alpha, SEC61-beta and SEC61-gamma.</text>
</comment>
<comment type="subcellular location">
    <subcellularLocation>
        <location evidence="3">Endoplasmic reticulum membrane</location>
        <topology evidence="3">Single-pass membrane protein</topology>
    </subcellularLocation>
</comment>
<comment type="similarity">
    <text evidence="3">Belongs to the SecE/SEC61-gamma family.</text>
</comment>
<reference key="1">
    <citation type="journal article" date="2000" name="Nature">
        <title>Sequence and analysis of chromosome 3 of the plant Arabidopsis thaliana.</title>
        <authorList>
            <person name="Salanoubat M."/>
            <person name="Lemcke K."/>
            <person name="Rieger M."/>
            <person name="Ansorge W."/>
            <person name="Unseld M."/>
            <person name="Fartmann B."/>
            <person name="Valle G."/>
            <person name="Bloecker H."/>
            <person name="Perez-Alonso M."/>
            <person name="Obermaier B."/>
            <person name="Delseny M."/>
            <person name="Boutry M."/>
            <person name="Grivell L.A."/>
            <person name="Mache R."/>
            <person name="Puigdomenech P."/>
            <person name="De Simone V."/>
            <person name="Choisne N."/>
            <person name="Artiguenave F."/>
            <person name="Robert C."/>
            <person name="Brottier P."/>
            <person name="Wincker P."/>
            <person name="Cattolico L."/>
            <person name="Weissenbach J."/>
            <person name="Saurin W."/>
            <person name="Quetier F."/>
            <person name="Schaefer M."/>
            <person name="Mueller-Auer S."/>
            <person name="Gabel C."/>
            <person name="Fuchs M."/>
            <person name="Benes V."/>
            <person name="Wurmbach E."/>
            <person name="Drzonek H."/>
            <person name="Erfle H."/>
            <person name="Jordan N."/>
            <person name="Bangert S."/>
            <person name="Wiedelmann R."/>
            <person name="Kranz H."/>
            <person name="Voss H."/>
            <person name="Holland R."/>
            <person name="Brandt P."/>
            <person name="Nyakatura G."/>
            <person name="Vezzi A."/>
            <person name="D'Angelo M."/>
            <person name="Pallavicini A."/>
            <person name="Toppo S."/>
            <person name="Simionati B."/>
            <person name="Conrad A."/>
            <person name="Hornischer K."/>
            <person name="Kauer G."/>
            <person name="Loehnert T.-H."/>
            <person name="Nordsiek G."/>
            <person name="Reichelt J."/>
            <person name="Scharfe M."/>
            <person name="Schoen O."/>
            <person name="Bargues M."/>
            <person name="Terol J."/>
            <person name="Climent J."/>
            <person name="Navarro P."/>
            <person name="Collado C."/>
            <person name="Perez-Perez A."/>
            <person name="Ottenwaelder B."/>
            <person name="Duchemin D."/>
            <person name="Cooke R."/>
            <person name="Laudie M."/>
            <person name="Berger-Llauro C."/>
            <person name="Purnelle B."/>
            <person name="Masuy D."/>
            <person name="de Haan M."/>
            <person name="Maarse A.C."/>
            <person name="Alcaraz J.-P."/>
            <person name="Cottet A."/>
            <person name="Casacuberta E."/>
            <person name="Monfort A."/>
            <person name="Argiriou A."/>
            <person name="Flores M."/>
            <person name="Liguori R."/>
            <person name="Vitale D."/>
            <person name="Mannhaupt G."/>
            <person name="Haase D."/>
            <person name="Schoof H."/>
            <person name="Rudd S."/>
            <person name="Zaccaria P."/>
            <person name="Mewes H.-W."/>
            <person name="Mayer K.F.X."/>
            <person name="Kaul S."/>
            <person name="Town C.D."/>
            <person name="Koo H.L."/>
            <person name="Tallon L.J."/>
            <person name="Jenkins J."/>
            <person name="Rooney T."/>
            <person name="Rizzo M."/>
            <person name="Walts A."/>
            <person name="Utterback T."/>
            <person name="Fujii C.Y."/>
            <person name="Shea T.P."/>
            <person name="Creasy T.H."/>
            <person name="Haas B."/>
            <person name="Maiti R."/>
            <person name="Wu D."/>
            <person name="Peterson J."/>
            <person name="Van Aken S."/>
            <person name="Pai G."/>
            <person name="Militscher J."/>
            <person name="Sellers P."/>
            <person name="Gill J.E."/>
            <person name="Feldblyum T.V."/>
            <person name="Preuss D."/>
            <person name="Lin X."/>
            <person name="Nierman W.C."/>
            <person name="Salzberg S.L."/>
            <person name="White O."/>
            <person name="Venter J.C."/>
            <person name="Fraser C.M."/>
            <person name="Kaneko T."/>
            <person name="Nakamura Y."/>
            <person name="Sato S."/>
            <person name="Kato T."/>
            <person name="Asamizu E."/>
            <person name="Sasamoto S."/>
            <person name="Kimura T."/>
            <person name="Idesawa K."/>
            <person name="Kawashima K."/>
            <person name="Kishida Y."/>
            <person name="Kiyokawa C."/>
            <person name="Kohara M."/>
            <person name="Matsumoto M."/>
            <person name="Matsuno A."/>
            <person name="Muraki A."/>
            <person name="Nakayama S."/>
            <person name="Nakazaki N."/>
            <person name="Shinpo S."/>
            <person name="Takeuchi C."/>
            <person name="Wada T."/>
            <person name="Watanabe A."/>
            <person name="Yamada M."/>
            <person name="Yasuda M."/>
            <person name="Tabata S."/>
        </authorList>
    </citation>
    <scope>NUCLEOTIDE SEQUENCE [LARGE SCALE GENOMIC DNA]</scope>
    <source>
        <strain>cv. Columbia</strain>
    </source>
</reference>
<reference key="2">
    <citation type="journal article" date="2017" name="Plant J.">
        <title>Araport11: a complete reannotation of the Arabidopsis thaliana reference genome.</title>
        <authorList>
            <person name="Cheng C.Y."/>
            <person name="Krishnakumar V."/>
            <person name="Chan A.P."/>
            <person name="Thibaud-Nissen F."/>
            <person name="Schobel S."/>
            <person name="Town C.D."/>
        </authorList>
    </citation>
    <scope>GENOME REANNOTATION</scope>
    <source>
        <strain>cv. Columbia</strain>
    </source>
</reference>
<reference key="3">
    <citation type="journal article" date="2002" name="Science">
        <title>Functional annotation of a full-length Arabidopsis cDNA collection.</title>
        <authorList>
            <person name="Seki M."/>
            <person name="Narusaka M."/>
            <person name="Kamiya A."/>
            <person name="Ishida J."/>
            <person name="Satou M."/>
            <person name="Sakurai T."/>
            <person name="Nakajima M."/>
            <person name="Enju A."/>
            <person name="Akiyama K."/>
            <person name="Oono Y."/>
            <person name="Muramatsu M."/>
            <person name="Hayashizaki Y."/>
            <person name="Kawai J."/>
            <person name="Carninci P."/>
            <person name="Itoh M."/>
            <person name="Ishii Y."/>
            <person name="Arakawa T."/>
            <person name="Shibata K."/>
            <person name="Shinagawa A."/>
            <person name="Shinozaki K."/>
        </authorList>
    </citation>
    <scope>NUCLEOTIDE SEQUENCE [LARGE SCALE MRNA]</scope>
    <source>
        <strain>cv. Columbia</strain>
    </source>
</reference>
<reference key="4">
    <citation type="submission" date="2002-03" db="EMBL/GenBank/DDBJ databases">
        <title>Full-length cDNA from Arabidopsis thaliana.</title>
        <authorList>
            <person name="Brover V.V."/>
            <person name="Troukhan M.E."/>
            <person name="Alexandrov N.A."/>
            <person name="Lu Y.-P."/>
            <person name="Flavell R.B."/>
            <person name="Feldmann K.A."/>
        </authorList>
    </citation>
    <scope>NUCLEOTIDE SEQUENCE [LARGE SCALE MRNA]</scope>
</reference>
<reference key="5">
    <citation type="journal article" date="2012" name="Mol. Cell. Proteomics">
        <title>Comparative large-scale characterisation of plant vs. mammal proteins reveals similar and idiosyncratic N-alpha acetylation features.</title>
        <authorList>
            <person name="Bienvenut W.V."/>
            <person name="Sumpton D."/>
            <person name="Martinez A."/>
            <person name="Lilla S."/>
            <person name="Espagne C."/>
            <person name="Meinnel T."/>
            <person name="Giglione C."/>
        </authorList>
    </citation>
    <scope>ACETYLATION [LARGE SCALE ANALYSIS] AT MET-1</scope>
    <scope>IDENTIFICATION BY MASS SPECTROMETRY [LARGE SCALE ANALYSIS]</scope>
</reference>
<sequence>MEAIDSAIDPLRDFAKSSVRLVQRCHKPDRKEFTKVAVRTAIGFVVMGFVGFFVKLVFIPINNIIVGSS</sequence>
<gene>
    <name type="primary">SEC61G3</name>
    <name type="ordered locus">At3g48570</name>
    <name type="ORF">T8P19.80</name>
</gene>
<name>S61G3_ARATH</name>
<evidence type="ECO:0000250" key="1"/>
<evidence type="ECO:0000255" key="2"/>
<evidence type="ECO:0000305" key="3"/>
<evidence type="ECO:0007744" key="4">
    <source>
    </source>
</evidence>
<protein>
    <recommendedName>
        <fullName>Protein transport protein Sec61 subunit gamma-3</fullName>
    </recommendedName>
</protein>
<proteinExistence type="evidence at protein level"/>
<feature type="chain" id="PRO_0000104206" description="Protein transport protein Sec61 subunit gamma-3">
    <location>
        <begin position="1"/>
        <end position="69"/>
    </location>
</feature>
<feature type="topological domain" description="Cytoplasmic" evidence="2">
    <location>
        <begin position="1"/>
        <end position="32"/>
    </location>
</feature>
<feature type="transmembrane region" description="Helical" evidence="2">
    <location>
        <begin position="33"/>
        <end position="61"/>
    </location>
</feature>
<feature type="topological domain" description="Extracellular" evidence="2">
    <location>
        <begin position="62"/>
        <end position="69"/>
    </location>
</feature>
<feature type="modified residue" description="N-acetylmethionine" evidence="4">
    <location>
        <position position="1"/>
    </location>
</feature>
<dbReference type="EMBL" id="AL133315">
    <property type="protein sequence ID" value="CAB62346.1"/>
    <property type="molecule type" value="Genomic_DNA"/>
</dbReference>
<dbReference type="EMBL" id="CP002686">
    <property type="protein sequence ID" value="AEE78431.1"/>
    <property type="molecule type" value="Genomic_DNA"/>
</dbReference>
<dbReference type="EMBL" id="AK118355">
    <property type="protein sequence ID" value="BAC42969.1"/>
    <property type="molecule type" value="mRNA"/>
</dbReference>
<dbReference type="EMBL" id="AY085342">
    <property type="protein sequence ID" value="AAM62573.1"/>
    <property type="molecule type" value="mRNA"/>
</dbReference>
<dbReference type="PIR" id="T46201">
    <property type="entry name" value="T46201"/>
</dbReference>
<dbReference type="RefSeq" id="NP_566909.1">
    <property type="nucleotide sequence ID" value="NM_114716.4"/>
</dbReference>
<dbReference type="SMR" id="Q9SMP2"/>
<dbReference type="BioGRID" id="9335">
    <property type="interactions" value="1"/>
</dbReference>
<dbReference type="FunCoup" id="Q9SMP2">
    <property type="interactions" value="2211"/>
</dbReference>
<dbReference type="IntAct" id="Q9SMP2">
    <property type="interactions" value="1"/>
</dbReference>
<dbReference type="STRING" id="3702.Q9SMP2"/>
<dbReference type="iPTMnet" id="Q9SMP2"/>
<dbReference type="PaxDb" id="3702-AT3G48570.1"/>
<dbReference type="ProteomicsDB" id="232864"/>
<dbReference type="EnsemblPlants" id="AT3G48570.1">
    <property type="protein sequence ID" value="AT3G48570.1"/>
    <property type="gene ID" value="AT3G48570"/>
</dbReference>
<dbReference type="GeneID" id="824017"/>
<dbReference type="Gramene" id="AT3G48570.1">
    <property type="protein sequence ID" value="AT3G48570.1"/>
    <property type="gene ID" value="AT3G48570"/>
</dbReference>
<dbReference type="KEGG" id="ath:AT3G48570"/>
<dbReference type="Araport" id="AT3G48570"/>
<dbReference type="TAIR" id="AT3G48570"/>
<dbReference type="eggNOG" id="KOG3498">
    <property type="taxonomic scope" value="Eukaryota"/>
</dbReference>
<dbReference type="HOGENOM" id="CLU_167752_1_1_1"/>
<dbReference type="InParanoid" id="Q9SMP2"/>
<dbReference type="OMA" id="RFMRKCT"/>
<dbReference type="OrthoDB" id="504453at2759"/>
<dbReference type="PhylomeDB" id="Q9SMP2"/>
<dbReference type="PRO" id="PR:Q9SMP2"/>
<dbReference type="Proteomes" id="UP000006548">
    <property type="component" value="Chromosome 3"/>
</dbReference>
<dbReference type="ExpressionAtlas" id="Q9SMP2">
    <property type="expression patterns" value="baseline and differential"/>
</dbReference>
<dbReference type="GO" id="GO:0005789">
    <property type="term" value="C:endoplasmic reticulum membrane"/>
    <property type="evidence" value="ECO:0007669"/>
    <property type="project" value="UniProtKB-SubCell"/>
</dbReference>
<dbReference type="GO" id="GO:0005886">
    <property type="term" value="C:plasma membrane"/>
    <property type="evidence" value="ECO:0007005"/>
    <property type="project" value="TAIR"/>
</dbReference>
<dbReference type="GO" id="GO:0008320">
    <property type="term" value="F:protein transmembrane transporter activity"/>
    <property type="evidence" value="ECO:0007669"/>
    <property type="project" value="InterPro"/>
</dbReference>
<dbReference type="GO" id="GO:0006886">
    <property type="term" value="P:intracellular protein transport"/>
    <property type="evidence" value="ECO:0007669"/>
    <property type="project" value="InterPro"/>
</dbReference>
<dbReference type="GO" id="GO:0006605">
    <property type="term" value="P:protein targeting"/>
    <property type="evidence" value="ECO:0007669"/>
    <property type="project" value="InterPro"/>
</dbReference>
<dbReference type="FunFam" id="1.20.5.820:FF:000001">
    <property type="entry name" value="Transport protein Sec61 subunit gamma"/>
    <property type="match status" value="1"/>
</dbReference>
<dbReference type="Gene3D" id="1.20.5.820">
    <property type="entry name" value="Preprotein translocase SecE subunit"/>
    <property type="match status" value="1"/>
</dbReference>
<dbReference type="HAMAP" id="MF_00422">
    <property type="entry name" value="SecE"/>
    <property type="match status" value="1"/>
</dbReference>
<dbReference type="InterPro" id="IPR023391">
    <property type="entry name" value="Prot_translocase_SecE_dom_sf"/>
</dbReference>
<dbReference type="InterPro" id="IPR008158">
    <property type="entry name" value="Translocase_Sec61-g"/>
</dbReference>
<dbReference type="InterPro" id="IPR001901">
    <property type="entry name" value="Translocase_SecE/Sec61-g"/>
</dbReference>
<dbReference type="NCBIfam" id="TIGR00327">
    <property type="entry name" value="secE_euk_arch"/>
    <property type="match status" value="1"/>
</dbReference>
<dbReference type="PANTHER" id="PTHR12309">
    <property type="entry name" value="SEC61 GAMMA SUBUNIT"/>
    <property type="match status" value="1"/>
</dbReference>
<dbReference type="Pfam" id="PF00584">
    <property type="entry name" value="SecE"/>
    <property type="match status" value="1"/>
</dbReference>
<dbReference type="SUPFAM" id="SSF103456">
    <property type="entry name" value="Preprotein translocase SecE subunit"/>
    <property type="match status" value="1"/>
</dbReference>
<keyword id="KW-0007">Acetylation</keyword>
<keyword id="KW-0256">Endoplasmic reticulum</keyword>
<keyword id="KW-0472">Membrane</keyword>
<keyword id="KW-0653">Protein transport</keyword>
<keyword id="KW-1185">Reference proteome</keyword>
<keyword id="KW-0811">Translocation</keyword>
<keyword id="KW-0812">Transmembrane</keyword>
<keyword id="KW-1133">Transmembrane helix</keyword>
<keyword id="KW-0813">Transport</keyword>
<organism>
    <name type="scientific">Arabidopsis thaliana</name>
    <name type="common">Mouse-ear cress</name>
    <dbReference type="NCBI Taxonomy" id="3702"/>
    <lineage>
        <taxon>Eukaryota</taxon>
        <taxon>Viridiplantae</taxon>
        <taxon>Streptophyta</taxon>
        <taxon>Embryophyta</taxon>
        <taxon>Tracheophyta</taxon>
        <taxon>Spermatophyta</taxon>
        <taxon>Magnoliopsida</taxon>
        <taxon>eudicotyledons</taxon>
        <taxon>Gunneridae</taxon>
        <taxon>Pentapetalae</taxon>
        <taxon>rosids</taxon>
        <taxon>malvids</taxon>
        <taxon>Brassicales</taxon>
        <taxon>Brassicaceae</taxon>
        <taxon>Camelineae</taxon>
        <taxon>Arabidopsis</taxon>
    </lineage>
</organism>
<accession>Q9SMP2</accession>